<organism>
    <name type="scientific">Fundulus heteroclitus</name>
    <name type="common">Killifish</name>
    <name type="synonym">Mummichog</name>
    <dbReference type="NCBI Taxonomy" id="8078"/>
    <lineage>
        <taxon>Eukaryota</taxon>
        <taxon>Metazoa</taxon>
        <taxon>Chordata</taxon>
        <taxon>Craniata</taxon>
        <taxon>Vertebrata</taxon>
        <taxon>Euteleostomi</taxon>
        <taxon>Actinopterygii</taxon>
        <taxon>Neopterygii</taxon>
        <taxon>Teleostei</taxon>
        <taxon>Neoteleostei</taxon>
        <taxon>Acanthomorphata</taxon>
        <taxon>Ovalentaria</taxon>
        <taxon>Atherinomorphae</taxon>
        <taxon>Cyprinodontiformes</taxon>
        <taxon>Fundulidae</taxon>
        <taxon>Fundulus</taxon>
    </lineage>
</organism>
<comment type="function">
    <text>Precursor of the major egg-yolk proteins that are sources of nutrients during early development of oviparous organisms.</text>
</comment>
<comment type="tissue specificity">
    <text>Produced by the liver, secreted into the blood and then sequestered by receptor mediated endocytosis into growing oocytes, where it is generally cleaved, giving rise to the respective yolk components composed of complex suite of small cleavage products.</text>
</comment>
<comment type="PTM">
    <text evidence="1">Phosvitin, an egg yolk storage protein, is one of the most highly phosphorylated (10%) proteins in nature.</text>
</comment>
<comment type="PTM">
    <text>The N-terminal of the blood vitellogenin is blocked.</text>
</comment>
<feature type="signal peptide" evidence="2">
    <location>
        <begin position="1"/>
        <end position="14"/>
    </location>
</feature>
<feature type="chain" id="PRO_0000041564" description="Vitellogenin-1">
    <location>
        <begin position="15"/>
        <end position="1704"/>
    </location>
</feature>
<feature type="chain" id="PRO_0000041565" description="Lipovitellin-1">
    <location>
        <begin position="15"/>
        <end status="unknown"/>
    </location>
</feature>
<feature type="chain" id="PRO_0000041566" description="Phosvitin" evidence="1">
    <location>
        <begin position="1081" status="uncertain"/>
        <end position="1258" status="uncertain"/>
    </location>
</feature>
<feature type="chain" id="PRO_0000041567" description="Lipovitellin-2">
    <location>
        <begin status="unknown"/>
        <end position="1704"/>
    </location>
</feature>
<feature type="domain" description="Vitellogenin" evidence="3">
    <location>
        <begin position="22"/>
        <end position="660"/>
    </location>
</feature>
<feature type="domain" description="VWFD" evidence="4">
    <location>
        <begin position="1442"/>
        <end position="1617"/>
    </location>
</feature>
<feature type="region of interest" description="Disordered" evidence="5">
    <location>
        <begin position="1078"/>
        <end position="1213"/>
    </location>
</feature>
<feature type="compositionally biased region" description="Low complexity" evidence="5">
    <location>
        <begin position="1078"/>
        <end position="1109"/>
    </location>
</feature>
<feature type="compositionally biased region" description="Low complexity" evidence="5">
    <location>
        <begin position="1122"/>
        <end position="1204"/>
    </location>
</feature>
<feature type="glycosylation site" description="N-linked (GlcNAc...) asparagine" evidence="2">
    <location>
        <position position="446"/>
    </location>
</feature>
<feature type="glycosylation site" description="N-linked (GlcNAc...) asparagine" evidence="2">
    <location>
        <position position="635"/>
    </location>
</feature>
<feature type="glycosylation site" description="N-linked (GlcNAc...) asparagine" evidence="2">
    <location>
        <position position="903"/>
    </location>
</feature>
<feature type="glycosylation site" description="N-linked (GlcNAc...) asparagine" evidence="2">
    <location>
        <position position="908"/>
    </location>
</feature>
<feature type="glycosylation site" description="N-linked (GlcNAc...) asparagine" evidence="2">
    <location>
        <position position="1019"/>
    </location>
</feature>
<feature type="glycosylation site" description="N-linked (GlcNAc...) asparagine" evidence="2">
    <location>
        <position position="1054"/>
    </location>
</feature>
<feature type="glycosylation site" description="N-linked (GlcNAc...) asparagine" evidence="2">
    <location>
        <position position="1080"/>
    </location>
</feature>
<feature type="glycosylation site" description="N-linked (GlcNAc...) asparagine" evidence="2">
    <location>
        <position position="1121"/>
    </location>
</feature>
<feature type="glycosylation site" description="N-linked (GlcNAc...) asparagine" evidence="2">
    <location>
        <position position="1174"/>
    </location>
</feature>
<feature type="glycosylation site" description="N-linked (GlcNAc...) asparagine" evidence="2">
    <location>
        <position position="1285"/>
    </location>
</feature>
<feature type="glycosylation site" description="N-linked (GlcNAc...) asparagine" evidence="2">
    <location>
        <position position="1322"/>
    </location>
</feature>
<feature type="glycosylation site" description="N-linked (GlcNAc...) asparagine" evidence="2">
    <location>
        <position position="1375"/>
    </location>
</feature>
<feature type="glycosylation site" description="N-linked (GlcNAc...) asparagine" evidence="2">
    <location>
        <position position="1379"/>
    </location>
</feature>
<feature type="glycosylation site" description="N-linked (GlcNAc...) asparagine" evidence="2">
    <location>
        <position position="1405"/>
    </location>
</feature>
<feature type="glycosylation site" description="N-linked (GlcNAc...) asparagine" evidence="2">
    <location>
        <position position="1456"/>
    </location>
</feature>
<feature type="glycosylation site" description="N-linked (GlcNAc...) asparagine" evidence="2">
    <location>
        <position position="1512"/>
    </location>
</feature>
<feature type="disulfide bond" evidence="4">
    <location>
        <begin position="1444"/>
        <end position="1580"/>
    </location>
</feature>
<feature type="disulfide bond" evidence="4">
    <location>
        <begin position="1467"/>
        <end position="1616"/>
    </location>
</feature>
<name>VIT1_FUNHE</name>
<dbReference type="EMBL" id="U07055">
    <property type="protein sequence ID" value="AAA93123.2"/>
    <property type="molecule type" value="mRNA"/>
</dbReference>
<dbReference type="PIR" id="T43141">
    <property type="entry name" value="T43141"/>
</dbReference>
<dbReference type="SMR" id="Q90508"/>
<dbReference type="STRING" id="8078.ENSFHEP00000029770"/>
<dbReference type="GlyCosmos" id="Q90508">
    <property type="glycosylation" value="16 sites, No reported glycans"/>
</dbReference>
<dbReference type="Proteomes" id="UP000265000">
    <property type="component" value="Whole Genome Shotgun Assembly"/>
</dbReference>
<dbReference type="GO" id="GO:0005319">
    <property type="term" value="F:lipid transporter activity"/>
    <property type="evidence" value="ECO:0007669"/>
    <property type="project" value="InterPro"/>
</dbReference>
<dbReference type="GO" id="GO:0045735">
    <property type="term" value="F:nutrient reservoir activity"/>
    <property type="evidence" value="ECO:0007669"/>
    <property type="project" value="UniProtKB-KW"/>
</dbReference>
<dbReference type="GO" id="GO:0071391">
    <property type="term" value="P:cellular response to estrogen stimulus"/>
    <property type="evidence" value="ECO:0007669"/>
    <property type="project" value="TreeGrafter"/>
</dbReference>
<dbReference type="GO" id="GO:0032355">
    <property type="term" value="P:response to estradiol"/>
    <property type="evidence" value="ECO:0007669"/>
    <property type="project" value="TreeGrafter"/>
</dbReference>
<dbReference type="FunFam" id="2.20.50.20:FF:000001">
    <property type="entry name" value="Vitellogenin 5"/>
    <property type="match status" value="1"/>
</dbReference>
<dbReference type="FunFam" id="1.25.10.20:FF:000002">
    <property type="entry name" value="Vitellogenin 7"/>
    <property type="match status" value="1"/>
</dbReference>
<dbReference type="FunFam" id="2.20.80.10:FF:000001">
    <property type="entry name" value="Vitellogenin 7"/>
    <property type="match status" value="1"/>
</dbReference>
<dbReference type="FunFam" id="2.30.230.10:FF:000002">
    <property type="entry name" value="Vitellogenin 7"/>
    <property type="match status" value="1"/>
</dbReference>
<dbReference type="Gene3D" id="2.30.230.10">
    <property type="entry name" value="Lipovitellin, beta-sheet shell regions, chain A"/>
    <property type="match status" value="1"/>
</dbReference>
<dbReference type="Gene3D" id="2.20.80.10">
    <property type="entry name" value="Lipovitellin-phosvitin complex, chain A, domain 4"/>
    <property type="match status" value="1"/>
</dbReference>
<dbReference type="Gene3D" id="2.20.50.20">
    <property type="entry name" value="Lipovitellin. Chain A, domain 3"/>
    <property type="match status" value="2"/>
</dbReference>
<dbReference type="Gene3D" id="2.20.90.10">
    <property type="entry name" value="Vitellinogen, beta-sheet shell domain"/>
    <property type="match status" value="1"/>
</dbReference>
<dbReference type="Gene3D" id="1.25.10.20">
    <property type="entry name" value="Vitellinogen, superhelical"/>
    <property type="match status" value="1"/>
</dbReference>
<dbReference type="InterPro" id="IPR015819">
    <property type="entry name" value="Lipid_transp_b-sht_shell"/>
</dbReference>
<dbReference type="InterPro" id="IPR011030">
    <property type="entry name" value="Lipovitellin_superhlx_dom"/>
</dbReference>
<dbReference type="InterPro" id="IPR015816">
    <property type="entry name" value="Vitellinogen_b-sht_N"/>
</dbReference>
<dbReference type="InterPro" id="IPR015258">
    <property type="entry name" value="Vitellinogen_b-sht_shell"/>
</dbReference>
<dbReference type="InterPro" id="IPR037088">
    <property type="entry name" value="Vitellinogen_b-sht_shell_sf"/>
</dbReference>
<dbReference type="InterPro" id="IPR015255">
    <property type="entry name" value="Vitellinogen_open_b-sht"/>
</dbReference>
<dbReference type="InterPro" id="IPR015817">
    <property type="entry name" value="Vitellinogen_open_b-sht_sub1"/>
</dbReference>
<dbReference type="InterPro" id="IPR050733">
    <property type="entry name" value="Vitellogenin/Apolipophorin"/>
</dbReference>
<dbReference type="InterPro" id="IPR001747">
    <property type="entry name" value="Vitellogenin_N"/>
</dbReference>
<dbReference type="InterPro" id="IPR001846">
    <property type="entry name" value="VWF_type-D"/>
</dbReference>
<dbReference type="PANTHER" id="PTHR23345">
    <property type="entry name" value="VITELLOGENIN-RELATED"/>
    <property type="match status" value="1"/>
</dbReference>
<dbReference type="PANTHER" id="PTHR23345:SF9">
    <property type="entry name" value="VITELLOGENIN-RELATED"/>
    <property type="match status" value="1"/>
</dbReference>
<dbReference type="Pfam" id="PF09175">
    <property type="entry name" value="Vit_b-sht_shell"/>
    <property type="match status" value="1"/>
</dbReference>
<dbReference type="Pfam" id="PF09172">
    <property type="entry name" value="Vit_open_b-sht"/>
    <property type="match status" value="1"/>
</dbReference>
<dbReference type="Pfam" id="PF01347">
    <property type="entry name" value="Vitellogenin_N"/>
    <property type="match status" value="1"/>
</dbReference>
<dbReference type="Pfam" id="PF00094">
    <property type="entry name" value="VWD"/>
    <property type="match status" value="1"/>
</dbReference>
<dbReference type="SMART" id="SM01169">
    <property type="entry name" value="DUF1943"/>
    <property type="match status" value="1"/>
</dbReference>
<dbReference type="SMART" id="SM01170">
    <property type="entry name" value="DUF1944"/>
    <property type="match status" value="1"/>
</dbReference>
<dbReference type="SMART" id="SM00638">
    <property type="entry name" value="LPD_N"/>
    <property type="match status" value="1"/>
</dbReference>
<dbReference type="SMART" id="SM00216">
    <property type="entry name" value="VWD"/>
    <property type="match status" value="1"/>
</dbReference>
<dbReference type="SUPFAM" id="SSF56968">
    <property type="entry name" value="Lipovitellin-phosvitin complex, beta-sheet shell regions"/>
    <property type="match status" value="3"/>
</dbReference>
<dbReference type="SUPFAM" id="SSF48431">
    <property type="entry name" value="Lipovitellin-phosvitin complex, superhelical domain"/>
    <property type="match status" value="1"/>
</dbReference>
<dbReference type="PROSITE" id="PS51211">
    <property type="entry name" value="VITELLOGENIN"/>
    <property type="match status" value="1"/>
</dbReference>
<dbReference type="PROSITE" id="PS51233">
    <property type="entry name" value="VWFD"/>
    <property type="match status" value="1"/>
</dbReference>
<reference key="1">
    <citation type="journal article" date="1995" name="J. Mol. Evol.">
        <title>Fundulus heteroclitus vitellogenin: the deduced primary structure of a piscine precursor to noncrystalline, liquid-phase yolk protein.</title>
        <authorList>
            <person name="Lafleur G.J. Jr."/>
            <person name="Byrne B.M."/>
            <person name="Kanungo J."/>
            <person name="Nelson L.D."/>
            <person name="Greenberg R.M."/>
            <person name="Wallace R.A."/>
        </authorList>
    </citation>
    <scope>NUCLEOTIDE SEQUENCE [MRNA]</scope>
    <scope>PROTEIN SEQUENCE OF 1220-1225</scope>
    <source>
        <tissue>Liver</tissue>
    </source>
</reference>
<reference key="2">
    <citation type="submission" date="2005-04" db="EMBL/GenBank/DDBJ databases">
        <authorList>
            <person name="LaFleur G.J. Jr."/>
            <person name="Cerda J."/>
        </authorList>
    </citation>
    <scope>SEQUENCE REVISION TO 98-113</scope>
    <source>
        <tissue>Liver</tissue>
    </source>
</reference>
<reference key="3">
    <citation type="journal article" date="2005" name="Biol. Reprod.">
        <title>Derivation of major yolk proteins from parental vitellogenins and alternative processing during oocyte maturation in Fundulus heteroclitus.</title>
        <authorList>
            <person name="LaFleur G.J. Jr."/>
            <person name="Raldua D."/>
            <person name="Fabra M."/>
            <person name="Carnevali O."/>
            <person name="Denslow N."/>
            <person name="Wallace R.A."/>
            <person name="Cerda J."/>
        </authorList>
    </citation>
    <scope>PROTEIN SEQUENCE OF 285-303; 413-437; 964-1001; 1220-1230; 1254-1260 AND 1439-1455</scope>
    <source>
        <tissue>Egg</tissue>
        <tissue>Oocyte</tissue>
    </source>
</reference>
<accession>Q90508</accession>
<proteinExistence type="evidence at protein level"/>
<sequence length="1704" mass="187924">MKAVVLALTLAFVAGQNFAPEFAAGKTYVYKYEALILGGLPEEGLARAGLKISTKLLLSAADQNTYMLKLVEPELSEYSGIWPKDPAVPATKLTAALAPQLAIPIKFEYTNGVVGKVFAPEEVSTLVLNIYRGILNILQLNIKKTHKVYDLQEVGTQGVCKTLYSISEDARIENILLTKTRDLSNCQERLNKDIGLAYTEKCDKCQEETKNLRGTTTLSYVLKPVADAVMILKAYVNELIQFSPFSEANGAAQMRTKQSLEFLEIEKEPIPSVKAEYRHRGSLKYEFSDELLQTPLQLIKISDAPAQVAEVLKHLATYNIEDVHENAPLKFLELVQLLRIARYEDLEMYWNQYKKMSPHRHWFLDTIPATGTFAGLRFIKEKFMAEEITIAEAAQAFITAVHMVTADPEVIKLFESLVDSDKVVENPLLREVVFLGYGTMVNKYCNKTVDCPVELIKPIQQRLSDAIAKNEEENIILYIKVLGNAGHPSSFKSLTKIMPIHGTAAVSLPMTIHVEAIMALRNIAKKESRMVQELALQLYMDKALHPELRMLSCIVLFETSPSMGLVTTVANSVKTEENLQVASFTYSHMKSLSRSPATIHPDVAAACSAAMKILGTKLDRLSLRYSKAVHVDLYNSSLAVGAAATAFYINDAATFMPKSFVAKTKGFIAGSTAEVLEIGANIEGLQELILKNPALSESTDRITKMKRVIKALSEWRSLPTSKPLASVYVKFFGQEIGFANIDKPMIDKAVKFGKELPIQEYGREALKALLLSGINFHYAKPVLAAEMRRILPTVAGIPMELSLYSAAVAAASVEIKPNTSPRLSADFDVKTLLETDVELKAEIRPMVAMDTYAVMGLNTDIFQAALVARAKLHSVVPAKIAARLNIKEGDFKLEALPVDVPENITSMNVTTFAVARNIEEPLVERITPLLPTKVLVPIPIRRHTSKLDPTRNSMLDSSELLPMEEEDVEPIPEYKFRRFAKKYCAKHIGVGLKACFKFASQNGASIQDIVLYKLAGSHNFSFSVTPIEGEVVERLEMEVKVGAKAAEKLVKRINLSEDEETEEGGPVLVKLNKILSSRRNSSSSSSSSSSSSSESRSSRSSSSSSSSSRSSRKIDLAARTNSSSSSSSRRSRSSSSSSSSSSSSSSSSSSSSRRSSSSSSSSSSSSSRSSRRVNSTRSSSSSSRTSSASSLASFFSDSSSSSSSSDRRSKEVMEKFQRLHKKMVASGSSASSVEAIYKEKKYLGEEEAVVAVILRAVKADKRMVGYQLGFYLDKPNARVQIIVANISSDSNWRICADAVVLSKHKVTTKISWGEQCRKYSTNVTGETGIVSSSPAARLRVSWERLPSTLKRYGKMVNKYVPVKILSDLIHTKRENSTRNISVIAVATSEKTIDIITKTPMSSVYNVTMHLPMCIPIDEIKGLSPFDEVIDKIHFMVSKAAAAECSFVEDTLYTFNNRSYKNKMPSSCYQVAAQDCTDELKFMVLLRKDSSEQHHINVKISEIDIDMFPKDDNVTVKVNEMEIPPPACLTATQQLPLKIKTKRRGLAVYAPSHGLQEVYFDRKTWRIKVADWMKGKTCGLCGKADGEIRQEYHTPNGRVAKNSISFAHSWILPAESCRDASECRLKLESVQLEKQLTIHGEDSTCFSVEPVPRCLPGCLPVKTTPVTVGFSCLASDPQTSVYDRSVDLRQTTQAHLACSCNTKCS</sequence>
<evidence type="ECO:0000250" key="1"/>
<evidence type="ECO:0000255" key="2"/>
<evidence type="ECO:0000255" key="3">
    <source>
        <dbReference type="PROSITE-ProRule" id="PRU00557"/>
    </source>
</evidence>
<evidence type="ECO:0000255" key="4">
    <source>
        <dbReference type="PROSITE-ProRule" id="PRU00580"/>
    </source>
</evidence>
<evidence type="ECO:0000256" key="5">
    <source>
        <dbReference type="SAM" id="MobiDB-lite"/>
    </source>
</evidence>
<keyword id="KW-0903">Direct protein sequencing</keyword>
<keyword id="KW-1015">Disulfide bond</keyword>
<keyword id="KW-0325">Glycoprotein</keyword>
<keyword id="KW-0597">Phosphoprotein</keyword>
<keyword id="KW-0732">Signal</keyword>
<keyword id="KW-0758">Storage protein</keyword>
<protein>
    <recommendedName>
        <fullName>Vitellogenin-1</fullName>
    </recommendedName>
    <alternativeName>
        <fullName>Vitellogenin I</fullName>
        <shortName>VTG I</shortName>
    </alternativeName>
    <component>
        <recommendedName>
            <fullName>Lipovitellin-1</fullName>
            <shortName>LV1</shortName>
        </recommendedName>
    </component>
    <component>
        <recommendedName>
            <fullName>Phosvitin</fullName>
            <shortName>PV</shortName>
        </recommendedName>
    </component>
    <component>
        <recommendedName>
            <fullName>Lipovitellin-2</fullName>
            <shortName>LV2</shortName>
        </recommendedName>
    </component>
</protein>
<gene>
    <name type="primary">vtg1</name>
</gene>